<organism>
    <name type="scientific">Wolinella succinogenes (strain ATCC 29543 / DSM 1740 / CCUG 13145 / JCM 31913 / LMG 7466 / NCTC 11488 / FDC 602W)</name>
    <name type="common">Vibrio succinogenes</name>
    <dbReference type="NCBI Taxonomy" id="273121"/>
    <lineage>
        <taxon>Bacteria</taxon>
        <taxon>Pseudomonadati</taxon>
        <taxon>Campylobacterota</taxon>
        <taxon>Epsilonproteobacteria</taxon>
        <taxon>Campylobacterales</taxon>
        <taxon>Helicobacteraceae</taxon>
        <taxon>Wolinella</taxon>
    </lineage>
</organism>
<evidence type="ECO:0000250" key="1"/>
<evidence type="ECO:0000255" key="2">
    <source>
        <dbReference type="HAMAP-Rule" id="MF_00366"/>
    </source>
</evidence>
<protein>
    <recommendedName>
        <fullName evidence="2">DNA-directed RNA polymerase subunit omega</fullName>
        <shortName evidence="2">RNAP omega subunit</shortName>
        <ecNumber evidence="2">2.7.7.6</ecNumber>
    </recommendedName>
    <alternativeName>
        <fullName evidence="2">RNA polymerase omega subunit</fullName>
    </alternativeName>
    <alternativeName>
        <fullName evidence="2">Transcriptase subunit omega</fullName>
    </alternativeName>
</protein>
<proteinExistence type="inferred from homology"/>
<gene>
    <name evidence="2" type="primary">rpoZ</name>
    <name type="ordered locus">WS0239</name>
</gene>
<comment type="function">
    <text evidence="2">Promotes RNA polymerase assembly. Latches the N- and C-terminal regions of the beta' subunit thereby facilitating its interaction with the beta and alpha subunits.</text>
</comment>
<comment type="catalytic activity">
    <reaction evidence="2">
        <text>RNA(n) + a ribonucleoside 5'-triphosphate = RNA(n+1) + diphosphate</text>
        <dbReference type="Rhea" id="RHEA:21248"/>
        <dbReference type="Rhea" id="RHEA-COMP:14527"/>
        <dbReference type="Rhea" id="RHEA-COMP:17342"/>
        <dbReference type="ChEBI" id="CHEBI:33019"/>
        <dbReference type="ChEBI" id="CHEBI:61557"/>
        <dbReference type="ChEBI" id="CHEBI:140395"/>
        <dbReference type="EC" id="2.7.7.6"/>
    </reaction>
</comment>
<comment type="subunit">
    <text evidence="1">The RNAP catalytic core consists of 2 alpha, 1 beta/beta' and 1 omega subunit. When a sigma factor is associated with the core the holoenzyme is formed, which can initiate transcription (By similarity).</text>
</comment>
<comment type="similarity">
    <text evidence="2">Belongs to the RNA polymerase subunit omega family.</text>
</comment>
<dbReference type="EC" id="2.7.7.6" evidence="2"/>
<dbReference type="EMBL" id="BX571657">
    <property type="protein sequence ID" value="CAE09395.1"/>
    <property type="molecule type" value="Genomic_DNA"/>
</dbReference>
<dbReference type="RefSeq" id="WP_011138195.1">
    <property type="nucleotide sequence ID" value="NC_005090.1"/>
</dbReference>
<dbReference type="SMR" id="Q7MSQ0"/>
<dbReference type="STRING" id="273121.WS0239"/>
<dbReference type="KEGG" id="wsu:WS0239"/>
<dbReference type="eggNOG" id="COG1758">
    <property type="taxonomic scope" value="Bacteria"/>
</dbReference>
<dbReference type="HOGENOM" id="CLU_125406_3_0_7"/>
<dbReference type="Proteomes" id="UP000000422">
    <property type="component" value="Chromosome"/>
</dbReference>
<dbReference type="GO" id="GO:0000428">
    <property type="term" value="C:DNA-directed RNA polymerase complex"/>
    <property type="evidence" value="ECO:0007669"/>
    <property type="project" value="UniProtKB-KW"/>
</dbReference>
<dbReference type="GO" id="GO:0003677">
    <property type="term" value="F:DNA binding"/>
    <property type="evidence" value="ECO:0007669"/>
    <property type="project" value="UniProtKB-UniRule"/>
</dbReference>
<dbReference type="GO" id="GO:0003899">
    <property type="term" value="F:DNA-directed RNA polymerase activity"/>
    <property type="evidence" value="ECO:0007669"/>
    <property type="project" value="UniProtKB-UniRule"/>
</dbReference>
<dbReference type="GO" id="GO:0006351">
    <property type="term" value="P:DNA-templated transcription"/>
    <property type="evidence" value="ECO:0007669"/>
    <property type="project" value="UniProtKB-UniRule"/>
</dbReference>
<dbReference type="Gene3D" id="3.90.940.10">
    <property type="match status" value="1"/>
</dbReference>
<dbReference type="HAMAP" id="MF_00366">
    <property type="entry name" value="RNApol_bact_RpoZ"/>
    <property type="match status" value="1"/>
</dbReference>
<dbReference type="InterPro" id="IPR003716">
    <property type="entry name" value="DNA-dir_RNA_pol_omega"/>
</dbReference>
<dbReference type="InterPro" id="IPR006110">
    <property type="entry name" value="Pol_omega/Rpo6/RPB6"/>
</dbReference>
<dbReference type="InterPro" id="IPR036161">
    <property type="entry name" value="RPB6/omega-like_sf"/>
</dbReference>
<dbReference type="NCBIfam" id="NF001579">
    <property type="entry name" value="PRK00392.6-2"/>
    <property type="match status" value="1"/>
</dbReference>
<dbReference type="Pfam" id="PF01192">
    <property type="entry name" value="RNA_pol_Rpb6"/>
    <property type="match status" value="1"/>
</dbReference>
<dbReference type="SMART" id="SM01409">
    <property type="entry name" value="RNA_pol_Rpb6"/>
    <property type="match status" value="1"/>
</dbReference>
<dbReference type="SUPFAM" id="SSF63562">
    <property type="entry name" value="RPB6/omega subunit-like"/>
    <property type="match status" value="1"/>
</dbReference>
<sequence>MQRMEEIAFKALNRVNNDRYLLANILFARIDELSKGAKPLVNMDVKKHKLTDIAMTEVAEGKIALSQIDQL</sequence>
<name>RPOZ_WOLSU</name>
<reference key="1">
    <citation type="journal article" date="2003" name="Proc. Natl. Acad. Sci. U.S.A.">
        <title>Complete genome sequence and analysis of Wolinella succinogenes.</title>
        <authorList>
            <person name="Baar C."/>
            <person name="Eppinger M."/>
            <person name="Raddatz G."/>
            <person name="Simon J."/>
            <person name="Lanz C."/>
            <person name="Klimmek O."/>
            <person name="Nandakumar R."/>
            <person name="Gross R."/>
            <person name="Rosinus A."/>
            <person name="Keller H."/>
            <person name="Jagtap P."/>
            <person name="Linke B."/>
            <person name="Meyer F."/>
            <person name="Lederer H."/>
            <person name="Schuster S.C."/>
        </authorList>
    </citation>
    <scope>NUCLEOTIDE SEQUENCE [LARGE SCALE GENOMIC DNA]</scope>
    <source>
        <strain>ATCC 29543 / DSM 1740 / CCUG 13145 / JCM 31913 / LMG 7466 / NCTC 11488 / FDC 602W</strain>
    </source>
</reference>
<keyword id="KW-0240">DNA-directed RNA polymerase</keyword>
<keyword id="KW-0548">Nucleotidyltransferase</keyword>
<keyword id="KW-1185">Reference proteome</keyword>
<keyword id="KW-0804">Transcription</keyword>
<keyword id="KW-0808">Transferase</keyword>
<feature type="chain" id="PRO_0000129014" description="DNA-directed RNA polymerase subunit omega">
    <location>
        <begin position="1"/>
        <end position="71"/>
    </location>
</feature>
<accession>Q7MSQ0</accession>